<proteinExistence type="evidence at transcript level"/>
<evidence type="ECO:0000250" key="1">
    <source>
        <dbReference type="UniProtKB" id="P10451"/>
    </source>
</evidence>
<evidence type="ECO:0000250" key="2">
    <source>
        <dbReference type="UniProtKB" id="P10923"/>
    </source>
</evidence>
<evidence type="ECO:0000250" key="3">
    <source>
        <dbReference type="UniProtKB" id="P31096"/>
    </source>
</evidence>
<evidence type="ECO:0000255" key="4"/>
<evidence type="ECO:0000256" key="5">
    <source>
        <dbReference type="SAM" id="MobiDB-lite"/>
    </source>
</evidence>
<evidence type="ECO:0000305" key="6"/>
<organism>
    <name type="scientific">Gallus gallus</name>
    <name type="common">Chicken</name>
    <dbReference type="NCBI Taxonomy" id="9031"/>
    <lineage>
        <taxon>Eukaryota</taxon>
        <taxon>Metazoa</taxon>
        <taxon>Chordata</taxon>
        <taxon>Craniata</taxon>
        <taxon>Vertebrata</taxon>
        <taxon>Euteleostomi</taxon>
        <taxon>Archelosauria</taxon>
        <taxon>Archosauria</taxon>
        <taxon>Dinosauria</taxon>
        <taxon>Saurischia</taxon>
        <taxon>Theropoda</taxon>
        <taxon>Coelurosauria</taxon>
        <taxon>Aves</taxon>
        <taxon>Neognathae</taxon>
        <taxon>Galloanserae</taxon>
        <taxon>Galliformes</taxon>
        <taxon>Phasianidae</taxon>
        <taxon>Phasianinae</taxon>
        <taxon>Gallus</taxon>
    </lineage>
</organism>
<feature type="signal peptide">
    <location>
        <begin position="1"/>
        <end position="16"/>
    </location>
</feature>
<feature type="chain" id="PRO_0000020327" description="Osteopontin">
    <location>
        <begin position="17"/>
        <end position="264"/>
    </location>
</feature>
<feature type="region of interest" description="Disordered" evidence="5">
    <location>
        <begin position="21"/>
        <end position="141"/>
    </location>
</feature>
<feature type="region of interest" description="Disordered" evidence="5">
    <location>
        <begin position="166"/>
        <end position="264"/>
    </location>
</feature>
<feature type="short sequence motif" description="Cell attachment site">
    <location>
        <begin position="132"/>
        <end position="134"/>
    </location>
</feature>
<feature type="compositionally biased region" description="Basic and acidic residues" evidence="5">
    <location>
        <begin position="31"/>
        <end position="51"/>
    </location>
</feature>
<feature type="compositionally biased region" description="Polar residues" evidence="5">
    <location>
        <begin position="52"/>
        <end position="73"/>
    </location>
</feature>
<feature type="compositionally biased region" description="Acidic residues" evidence="5">
    <location>
        <begin position="97"/>
        <end position="118"/>
    </location>
</feature>
<feature type="compositionally biased region" description="Basic and acidic residues" evidence="5">
    <location>
        <begin position="186"/>
        <end position="212"/>
    </location>
</feature>
<feature type="compositionally biased region" description="Polar residues" evidence="5">
    <location>
        <begin position="233"/>
        <end position="246"/>
    </location>
</feature>
<feature type="compositionally biased region" description="Basic and acidic residues" evidence="5">
    <location>
        <begin position="252"/>
        <end position="264"/>
    </location>
</feature>
<feature type="glycosylation site" description="N-linked (GlcNAc...) asparagine" evidence="4">
    <location>
        <position position="106"/>
    </location>
</feature>
<feature type="glycosylation site" description="N-linked (GlcNAc...) asparagine" evidence="4">
    <location>
        <position position="109"/>
    </location>
</feature>
<feature type="glycosylation site" description="N-linked (GlcNAc...) asparagine" evidence="4">
    <location>
        <position position="204"/>
    </location>
</feature>
<feature type="glycosylation site" description="N-linked (GlcNAc...) asparagine" evidence="4">
    <location>
        <position position="242"/>
    </location>
</feature>
<feature type="sequence conflict" description="In Ref. 2; AAA62729." evidence="6" ref="2">
    <original>D</original>
    <variation>G</variation>
    <location>
        <position position="104"/>
    </location>
</feature>
<feature type="sequence conflict" description="In Ref. 1; CAA40091." evidence="6" ref="1">
    <original>G</original>
    <variation>D</variation>
    <location>
        <position position="216"/>
    </location>
</feature>
<feature type="sequence conflict" description="In Ref. 1; CAA40091." evidence="6" ref="1">
    <original>R</original>
    <variation>A</variation>
    <location>
        <position position="235"/>
    </location>
</feature>
<feature type="sequence conflict" description="In Ref. 1; CAA40091." evidence="6" ref="1">
    <original>T</original>
    <variation>A</variation>
    <location>
        <position position="240"/>
    </location>
</feature>
<accession>P23498</accession>
<reference key="1">
    <citation type="journal article" date="1991" name="J. Biol. Chem.">
        <title>cDNA cloning and gene expression of chicken osteopontin. Expression of osteopontin mRNA in chondrocytes is enhanced by trypsin treatment of cells.</title>
        <authorList>
            <person name="Castagnola P."/>
            <person name="Bet P."/>
            <person name="Quarto R."/>
            <person name="Gennari M."/>
            <person name="Migliaccio G."/>
            <person name="Cancedda R."/>
        </authorList>
    </citation>
    <scope>NUCLEOTIDE SEQUENCE [MRNA]</scope>
</reference>
<reference key="2">
    <citation type="journal article" date="1991" name="Biochemistry">
        <title>Characterization of a cDNA for chicken osteopontin: expression during bone development, osteoblast differentiation, and tissue distribution.</title>
        <authorList>
            <person name="Moore M.A."/>
            <person name="Gotoh Y."/>
            <person name="Rafidi K."/>
            <person name="Gerstenfeld L.C."/>
        </authorList>
    </citation>
    <scope>NUCLEOTIDE SEQUENCE [MRNA]</scope>
</reference>
<reference key="3">
    <citation type="journal article" date="1994" name="Gene">
        <title>Characterization of the chicken osteopontin-encoding gene.</title>
        <authorList>
            <person name="Rafidi K."/>
            <person name="Simikina I."/>
            <person name="Johnson E."/>
            <person name="Moore M.A."/>
            <person name="Gerstenfeld L.C."/>
        </authorList>
    </citation>
    <scope>NUCLEOTIDE SEQUENCE [GENOMIC DNA]</scope>
</reference>
<gene>
    <name type="primary">SPP1</name>
</gene>
<dbReference type="EMBL" id="X56772">
    <property type="protein sequence ID" value="CAA40091.1"/>
    <property type="molecule type" value="mRNA"/>
</dbReference>
<dbReference type="EMBL" id="M59182">
    <property type="protein sequence ID" value="AAA62729.1"/>
    <property type="molecule type" value="mRNA"/>
</dbReference>
<dbReference type="EMBL" id="U01844">
    <property type="protein sequence ID" value="AAA18584.1"/>
    <property type="molecule type" value="Genomic_DNA"/>
</dbReference>
<dbReference type="PIR" id="I51384">
    <property type="entry name" value="A40019"/>
</dbReference>
<dbReference type="RefSeq" id="NP_989866.1">
    <property type="nucleotide sequence ID" value="NM_204535.4"/>
</dbReference>
<dbReference type="FunCoup" id="P23498">
    <property type="interactions" value="135"/>
</dbReference>
<dbReference type="STRING" id="9031.ENSGALP00000017754"/>
<dbReference type="GlyCosmos" id="P23498">
    <property type="glycosylation" value="4 sites, No reported glycans"/>
</dbReference>
<dbReference type="GlyGen" id="P23498">
    <property type="glycosylation" value="4 sites"/>
</dbReference>
<dbReference type="PaxDb" id="9031-ENSGALP00000017754"/>
<dbReference type="GeneID" id="395210"/>
<dbReference type="KEGG" id="gga:395210"/>
<dbReference type="CTD" id="6696"/>
<dbReference type="VEuPathDB" id="HostDB:geneid_395210"/>
<dbReference type="eggNOG" id="ENOG502S5R4">
    <property type="taxonomic scope" value="Eukaryota"/>
</dbReference>
<dbReference type="InParanoid" id="P23498"/>
<dbReference type="OrthoDB" id="9047304at2759"/>
<dbReference type="PhylomeDB" id="P23498"/>
<dbReference type="PRO" id="PR:P23498"/>
<dbReference type="Proteomes" id="UP000000539">
    <property type="component" value="Unassembled WGS sequence"/>
</dbReference>
<dbReference type="GO" id="GO:0005615">
    <property type="term" value="C:extracellular space"/>
    <property type="evidence" value="ECO:0000318"/>
    <property type="project" value="GO_Central"/>
</dbReference>
<dbReference type="GO" id="GO:0005125">
    <property type="term" value="F:cytokine activity"/>
    <property type="evidence" value="ECO:0007669"/>
    <property type="project" value="UniProtKB-KW"/>
</dbReference>
<dbReference type="GO" id="GO:0050840">
    <property type="term" value="F:extracellular matrix binding"/>
    <property type="evidence" value="ECO:0000318"/>
    <property type="project" value="GO_Central"/>
</dbReference>
<dbReference type="GO" id="GO:0008201">
    <property type="term" value="F:heparin binding"/>
    <property type="evidence" value="ECO:0000250"/>
    <property type="project" value="AgBase"/>
</dbReference>
<dbReference type="GO" id="GO:0031214">
    <property type="term" value="P:biomineral tissue development"/>
    <property type="evidence" value="ECO:0007669"/>
    <property type="project" value="UniProtKB-KW"/>
</dbReference>
<dbReference type="GO" id="GO:0007155">
    <property type="term" value="P:cell adhesion"/>
    <property type="evidence" value="ECO:0000318"/>
    <property type="project" value="GO_Central"/>
</dbReference>
<dbReference type="GO" id="GO:0001649">
    <property type="term" value="P:osteoblast differentiation"/>
    <property type="evidence" value="ECO:0000318"/>
    <property type="project" value="GO_Central"/>
</dbReference>
<dbReference type="GO" id="GO:0045780">
    <property type="term" value="P:positive regulation of bone resorption"/>
    <property type="evidence" value="ECO:0000318"/>
    <property type="project" value="GO_Central"/>
</dbReference>
<dbReference type="InterPro" id="IPR002038">
    <property type="entry name" value="Osteopontin"/>
</dbReference>
<dbReference type="InterPro" id="IPR019841">
    <property type="entry name" value="Osteopontin_CS"/>
</dbReference>
<dbReference type="PANTHER" id="PTHR10607">
    <property type="entry name" value="OSTEOPONTIN"/>
    <property type="match status" value="1"/>
</dbReference>
<dbReference type="PANTHER" id="PTHR10607:SF1">
    <property type="entry name" value="OSTEOPONTIN"/>
    <property type="match status" value="1"/>
</dbReference>
<dbReference type="Pfam" id="PF00865">
    <property type="entry name" value="Osteopontin"/>
    <property type="match status" value="1"/>
</dbReference>
<dbReference type="SMART" id="SM00017">
    <property type="entry name" value="OSTEO"/>
    <property type="match status" value="1"/>
</dbReference>
<dbReference type="PROSITE" id="PS00884">
    <property type="entry name" value="OSTEOPONTIN"/>
    <property type="match status" value="1"/>
</dbReference>
<protein>
    <recommendedName>
        <fullName>Osteopontin</fullName>
    </recommendedName>
    <alternativeName>
        <fullName>Bone sialoprotein 1</fullName>
    </alternativeName>
    <alternativeName>
        <fullName>Secreted phosphoprotein 1</fullName>
        <shortName>SPP-1</shortName>
    </alternativeName>
</protein>
<comment type="function">
    <text evidence="3">Major non-collagenous bone protein that binds tightly to hydroxyapatite. Appears to form an integral part of the mineralized matrix. Probably important to cell-matrix interaction.</text>
</comment>
<comment type="function">
    <text evidence="2">Acts as a cytokine involved in enhancing production of interferon-gamma and interleukin-12 and reducing production of interleukin-10 and is essential in the pathway that leads to type I immunity.</text>
</comment>
<comment type="subcellular location">
    <subcellularLocation>
        <location evidence="1">Secreted</location>
    </subcellularLocation>
</comment>
<comment type="PTM">
    <text>Extensively phosphorylated on serine residues.</text>
</comment>
<comment type="similarity">
    <text evidence="6">Belongs to the osteopontin family.</text>
</comment>
<sequence>MKLAFLCLCFISIAAAWPVSKSRQHAISASSEEKYDPRSHHTHRYHQDHVDSQSQEHLQQTQNDLASLQQTHYSSEENADVPEQPDFPDIPSKSQEAVDDDDDDDNDSNDTDESDEVVTDFPTEAPVTPFNRGDNAGRGDSVAYGFRAKAHVVKASKLRKAARKLIEDDATAEVGDSQLAGLWLPKESREQDSRELAQHQSVENDSRPRFDSPEVGGGDSKASAGVDSRESLASRSAVDTSNQTLESAEDAEDRHSIENNEVTR</sequence>
<keyword id="KW-0091">Biomineralization</keyword>
<keyword id="KW-0130">Cell adhesion</keyword>
<keyword id="KW-0202">Cytokine</keyword>
<keyword id="KW-0325">Glycoprotein</keyword>
<keyword id="KW-0597">Phosphoprotein</keyword>
<keyword id="KW-1185">Reference proteome</keyword>
<keyword id="KW-0964">Secreted</keyword>
<keyword id="KW-0730">Sialic acid</keyword>
<keyword id="KW-0732">Signal</keyword>
<name>OSTP_CHICK</name>